<comment type="function">
    <text evidence="1">Plays an important role in the de novo pathway of purine nucleotide biosynthesis. Catalyzes the first committed step in the biosynthesis of AMP from IMP.</text>
</comment>
<comment type="catalytic activity">
    <reaction evidence="1">
        <text>IMP + L-aspartate + GTP = N(6)-(1,2-dicarboxyethyl)-AMP + GDP + phosphate + 2 H(+)</text>
        <dbReference type="Rhea" id="RHEA:15753"/>
        <dbReference type="ChEBI" id="CHEBI:15378"/>
        <dbReference type="ChEBI" id="CHEBI:29991"/>
        <dbReference type="ChEBI" id="CHEBI:37565"/>
        <dbReference type="ChEBI" id="CHEBI:43474"/>
        <dbReference type="ChEBI" id="CHEBI:57567"/>
        <dbReference type="ChEBI" id="CHEBI:58053"/>
        <dbReference type="ChEBI" id="CHEBI:58189"/>
        <dbReference type="EC" id="6.3.4.4"/>
    </reaction>
</comment>
<comment type="cofactor">
    <cofactor evidence="1">
        <name>Mg(2+)</name>
        <dbReference type="ChEBI" id="CHEBI:18420"/>
    </cofactor>
    <text evidence="1">Binds 1 Mg(2+) ion per subunit.</text>
</comment>
<comment type="pathway">
    <text evidence="1">Purine metabolism; AMP biosynthesis via de novo pathway; AMP from IMP: step 1/2.</text>
</comment>
<comment type="subunit">
    <text evidence="1">Homodimer.</text>
</comment>
<comment type="subcellular location">
    <subcellularLocation>
        <location evidence="1">Cytoplasm</location>
    </subcellularLocation>
</comment>
<comment type="similarity">
    <text evidence="1">Belongs to the adenylosuccinate synthetase family.</text>
</comment>
<accession>B8ZJJ5</accession>
<protein>
    <recommendedName>
        <fullName evidence="1">Adenylosuccinate synthetase</fullName>
        <shortName evidence="1">AMPSase</shortName>
        <shortName evidence="1">AdSS</shortName>
        <ecNumber evidence="1">6.3.4.4</ecNumber>
    </recommendedName>
    <alternativeName>
        <fullName evidence="1">IMP--aspartate ligase</fullName>
    </alternativeName>
</protein>
<feature type="chain" id="PRO_1000116487" description="Adenylosuccinate synthetase">
    <location>
        <begin position="1"/>
        <end position="428"/>
    </location>
</feature>
<feature type="active site" description="Proton acceptor" evidence="1">
    <location>
        <position position="13"/>
    </location>
</feature>
<feature type="active site" description="Proton donor" evidence="1">
    <location>
        <position position="41"/>
    </location>
</feature>
<feature type="binding site" evidence="1">
    <location>
        <begin position="12"/>
        <end position="18"/>
    </location>
    <ligand>
        <name>GTP</name>
        <dbReference type="ChEBI" id="CHEBI:37565"/>
    </ligand>
</feature>
<feature type="binding site" description="in other chain" evidence="1">
    <location>
        <begin position="13"/>
        <end position="16"/>
    </location>
    <ligand>
        <name>IMP</name>
        <dbReference type="ChEBI" id="CHEBI:58053"/>
        <note>ligand shared between dimeric partners</note>
    </ligand>
</feature>
<feature type="binding site" evidence="1">
    <location>
        <position position="13"/>
    </location>
    <ligand>
        <name>Mg(2+)</name>
        <dbReference type="ChEBI" id="CHEBI:18420"/>
    </ligand>
</feature>
<feature type="binding site" description="in other chain" evidence="1">
    <location>
        <begin position="38"/>
        <end position="41"/>
    </location>
    <ligand>
        <name>IMP</name>
        <dbReference type="ChEBI" id="CHEBI:58053"/>
        <note>ligand shared between dimeric partners</note>
    </ligand>
</feature>
<feature type="binding site" evidence="1">
    <location>
        <begin position="40"/>
        <end position="42"/>
    </location>
    <ligand>
        <name>GTP</name>
        <dbReference type="ChEBI" id="CHEBI:37565"/>
    </ligand>
</feature>
<feature type="binding site" evidence="1">
    <location>
        <position position="40"/>
    </location>
    <ligand>
        <name>Mg(2+)</name>
        <dbReference type="ChEBI" id="CHEBI:18420"/>
    </ligand>
</feature>
<feature type="binding site" description="in other chain" evidence="1">
    <location>
        <position position="128"/>
    </location>
    <ligand>
        <name>IMP</name>
        <dbReference type="ChEBI" id="CHEBI:58053"/>
        <note>ligand shared between dimeric partners</note>
    </ligand>
</feature>
<feature type="binding site" evidence="1">
    <location>
        <position position="142"/>
    </location>
    <ligand>
        <name>IMP</name>
        <dbReference type="ChEBI" id="CHEBI:58053"/>
        <note>ligand shared between dimeric partners</note>
    </ligand>
</feature>
<feature type="binding site" description="in other chain" evidence="1">
    <location>
        <position position="223"/>
    </location>
    <ligand>
        <name>IMP</name>
        <dbReference type="ChEBI" id="CHEBI:58053"/>
        <note>ligand shared between dimeric partners</note>
    </ligand>
</feature>
<feature type="binding site" description="in other chain" evidence="1">
    <location>
        <position position="238"/>
    </location>
    <ligand>
        <name>IMP</name>
        <dbReference type="ChEBI" id="CHEBI:58053"/>
        <note>ligand shared between dimeric partners</note>
    </ligand>
</feature>
<feature type="binding site" evidence="1">
    <location>
        <begin position="298"/>
        <end position="304"/>
    </location>
    <ligand>
        <name>substrate</name>
    </ligand>
</feature>
<feature type="binding site" description="in other chain" evidence="1">
    <location>
        <position position="302"/>
    </location>
    <ligand>
        <name>IMP</name>
        <dbReference type="ChEBI" id="CHEBI:58053"/>
        <note>ligand shared between dimeric partners</note>
    </ligand>
</feature>
<feature type="binding site" evidence="1">
    <location>
        <position position="304"/>
    </location>
    <ligand>
        <name>GTP</name>
        <dbReference type="ChEBI" id="CHEBI:37565"/>
    </ligand>
</feature>
<feature type="binding site" evidence="1">
    <location>
        <begin position="330"/>
        <end position="332"/>
    </location>
    <ligand>
        <name>GTP</name>
        <dbReference type="ChEBI" id="CHEBI:37565"/>
    </ligand>
</feature>
<feature type="binding site" evidence="1">
    <location>
        <begin position="412"/>
        <end position="414"/>
    </location>
    <ligand>
        <name>GTP</name>
        <dbReference type="ChEBI" id="CHEBI:37565"/>
    </ligand>
</feature>
<gene>
    <name evidence="1" type="primary">purA</name>
    <name type="ordered locus">SPN23F00230</name>
</gene>
<organism>
    <name type="scientific">Streptococcus pneumoniae (strain ATCC 700669 / Spain 23F-1)</name>
    <dbReference type="NCBI Taxonomy" id="561276"/>
    <lineage>
        <taxon>Bacteria</taxon>
        <taxon>Bacillati</taxon>
        <taxon>Bacillota</taxon>
        <taxon>Bacilli</taxon>
        <taxon>Lactobacillales</taxon>
        <taxon>Streptococcaceae</taxon>
        <taxon>Streptococcus</taxon>
    </lineage>
</organism>
<name>PURA_STRPJ</name>
<proteinExistence type="inferred from homology"/>
<evidence type="ECO:0000255" key="1">
    <source>
        <dbReference type="HAMAP-Rule" id="MF_00011"/>
    </source>
</evidence>
<dbReference type="EC" id="6.3.4.4" evidence="1"/>
<dbReference type="EMBL" id="FM211187">
    <property type="protein sequence ID" value="CAR67885.1"/>
    <property type="molecule type" value="Genomic_DNA"/>
</dbReference>
<dbReference type="RefSeq" id="WP_000205044.1">
    <property type="nucleotide sequence ID" value="NC_011900.1"/>
</dbReference>
<dbReference type="SMR" id="B8ZJJ5"/>
<dbReference type="KEGG" id="sne:SPN23F00230"/>
<dbReference type="HOGENOM" id="CLU_029848_0_0_9"/>
<dbReference type="UniPathway" id="UPA00075">
    <property type="reaction ID" value="UER00335"/>
</dbReference>
<dbReference type="GO" id="GO:0005737">
    <property type="term" value="C:cytoplasm"/>
    <property type="evidence" value="ECO:0007669"/>
    <property type="project" value="UniProtKB-SubCell"/>
</dbReference>
<dbReference type="GO" id="GO:0004019">
    <property type="term" value="F:adenylosuccinate synthase activity"/>
    <property type="evidence" value="ECO:0007669"/>
    <property type="project" value="UniProtKB-UniRule"/>
</dbReference>
<dbReference type="GO" id="GO:0005525">
    <property type="term" value="F:GTP binding"/>
    <property type="evidence" value="ECO:0007669"/>
    <property type="project" value="UniProtKB-UniRule"/>
</dbReference>
<dbReference type="GO" id="GO:0000287">
    <property type="term" value="F:magnesium ion binding"/>
    <property type="evidence" value="ECO:0007669"/>
    <property type="project" value="UniProtKB-UniRule"/>
</dbReference>
<dbReference type="GO" id="GO:0044208">
    <property type="term" value="P:'de novo' AMP biosynthetic process"/>
    <property type="evidence" value="ECO:0007669"/>
    <property type="project" value="UniProtKB-UniRule"/>
</dbReference>
<dbReference type="GO" id="GO:0046040">
    <property type="term" value="P:IMP metabolic process"/>
    <property type="evidence" value="ECO:0007669"/>
    <property type="project" value="TreeGrafter"/>
</dbReference>
<dbReference type="CDD" id="cd03108">
    <property type="entry name" value="AdSS"/>
    <property type="match status" value="1"/>
</dbReference>
<dbReference type="FunFam" id="1.10.300.10:FF:000001">
    <property type="entry name" value="Adenylosuccinate synthetase"/>
    <property type="match status" value="1"/>
</dbReference>
<dbReference type="FunFam" id="3.90.170.10:FF:000001">
    <property type="entry name" value="Adenylosuccinate synthetase"/>
    <property type="match status" value="1"/>
</dbReference>
<dbReference type="Gene3D" id="3.40.440.10">
    <property type="entry name" value="Adenylosuccinate Synthetase, subunit A, domain 1"/>
    <property type="match status" value="1"/>
</dbReference>
<dbReference type="Gene3D" id="1.10.300.10">
    <property type="entry name" value="Adenylosuccinate Synthetase, subunit A, domain 2"/>
    <property type="match status" value="1"/>
</dbReference>
<dbReference type="Gene3D" id="3.90.170.10">
    <property type="entry name" value="Adenylosuccinate Synthetase, subunit A, domain 3"/>
    <property type="match status" value="1"/>
</dbReference>
<dbReference type="HAMAP" id="MF_00011">
    <property type="entry name" value="Adenylosucc_synth"/>
    <property type="match status" value="1"/>
</dbReference>
<dbReference type="InterPro" id="IPR018220">
    <property type="entry name" value="Adenylosuccin_syn_GTP-bd"/>
</dbReference>
<dbReference type="InterPro" id="IPR033128">
    <property type="entry name" value="Adenylosuccin_syn_Lys_AS"/>
</dbReference>
<dbReference type="InterPro" id="IPR042109">
    <property type="entry name" value="Adenylosuccinate_synth_dom1"/>
</dbReference>
<dbReference type="InterPro" id="IPR042110">
    <property type="entry name" value="Adenylosuccinate_synth_dom2"/>
</dbReference>
<dbReference type="InterPro" id="IPR042111">
    <property type="entry name" value="Adenylosuccinate_synth_dom3"/>
</dbReference>
<dbReference type="InterPro" id="IPR001114">
    <property type="entry name" value="Adenylosuccinate_synthetase"/>
</dbReference>
<dbReference type="InterPro" id="IPR027417">
    <property type="entry name" value="P-loop_NTPase"/>
</dbReference>
<dbReference type="NCBIfam" id="NF002223">
    <property type="entry name" value="PRK01117.1"/>
    <property type="match status" value="1"/>
</dbReference>
<dbReference type="NCBIfam" id="TIGR00184">
    <property type="entry name" value="purA"/>
    <property type="match status" value="1"/>
</dbReference>
<dbReference type="PANTHER" id="PTHR11846">
    <property type="entry name" value="ADENYLOSUCCINATE SYNTHETASE"/>
    <property type="match status" value="1"/>
</dbReference>
<dbReference type="PANTHER" id="PTHR11846:SF0">
    <property type="entry name" value="ADENYLOSUCCINATE SYNTHETASE"/>
    <property type="match status" value="1"/>
</dbReference>
<dbReference type="Pfam" id="PF00709">
    <property type="entry name" value="Adenylsucc_synt"/>
    <property type="match status" value="1"/>
</dbReference>
<dbReference type="SMART" id="SM00788">
    <property type="entry name" value="Adenylsucc_synt"/>
    <property type="match status" value="1"/>
</dbReference>
<dbReference type="SUPFAM" id="SSF52540">
    <property type="entry name" value="P-loop containing nucleoside triphosphate hydrolases"/>
    <property type="match status" value="1"/>
</dbReference>
<dbReference type="PROSITE" id="PS01266">
    <property type="entry name" value="ADENYLOSUCCIN_SYN_1"/>
    <property type="match status" value="1"/>
</dbReference>
<dbReference type="PROSITE" id="PS00513">
    <property type="entry name" value="ADENYLOSUCCIN_SYN_2"/>
    <property type="match status" value="1"/>
</dbReference>
<reference key="1">
    <citation type="journal article" date="2009" name="J. Bacteriol.">
        <title>Role of conjugative elements in the evolution of the multidrug-resistant pandemic clone Streptococcus pneumoniae Spain23F ST81.</title>
        <authorList>
            <person name="Croucher N.J."/>
            <person name="Walker D."/>
            <person name="Romero P."/>
            <person name="Lennard N."/>
            <person name="Paterson G.K."/>
            <person name="Bason N.C."/>
            <person name="Mitchell A.M."/>
            <person name="Quail M.A."/>
            <person name="Andrew P.W."/>
            <person name="Parkhill J."/>
            <person name="Bentley S.D."/>
            <person name="Mitchell T.J."/>
        </authorList>
    </citation>
    <scope>NUCLEOTIDE SEQUENCE [LARGE SCALE GENOMIC DNA]</scope>
    <source>
        <strain>ATCC 700669 / Spain 23F-1</strain>
    </source>
</reference>
<sequence length="428" mass="47570">MTSVVVVGTQWGDEGKGKITDFLSANAEVIARYQGGDNAGHTIVIDGKKFKLHLIPSGIFFPEKISVIGNGMVVNPKSLVKELSYLHEEGVTTDNLRISDRAHVILPYHIELDRLQEEAKGDNKIGTTIKGIGPAYMDKAARVGIRIADLLDKDIFRERLERNLAEKNRLFEKLYDSKAIVFDDIFEEYYEYGQQIKKYVIDTSVILNDALDNGKRVLFEGAQGVMLDIDQGTYPFVTSSNPVAGGVTIGSGVGPSKIDKVVGVCKAYTSRVGDGPFPTELFDEVGERIREVGHEYGTTTGRPRRVGWFDSVVMRHSRRVSGITNLSLNSIDVLSGLDTVKICVAYDLDGQRIDYYPASLEQLKRCKPIYEELPGWSEDITGVRNLEDLPENARNYVRRVSELVGVRISTFSVGPGREQTNILESVWS</sequence>
<keyword id="KW-0963">Cytoplasm</keyword>
<keyword id="KW-0342">GTP-binding</keyword>
<keyword id="KW-0436">Ligase</keyword>
<keyword id="KW-0460">Magnesium</keyword>
<keyword id="KW-0479">Metal-binding</keyword>
<keyword id="KW-0547">Nucleotide-binding</keyword>
<keyword id="KW-0658">Purine biosynthesis</keyword>